<dbReference type="EMBL" id="FO081114">
    <property type="protein sequence ID" value="CCD69206.1"/>
    <property type="molecule type" value="Genomic_DNA"/>
</dbReference>
<dbReference type="PIR" id="G88130">
    <property type="entry name" value="G88130"/>
</dbReference>
<dbReference type="RefSeq" id="NP_494836.1">
    <property type="nucleotide sequence ID" value="NM_062435.5"/>
</dbReference>
<dbReference type="SMR" id="Q19325"/>
<dbReference type="ComplexPortal" id="CPX-967">
    <property type="entry name" value="Nuclear mitotic cohesin complex"/>
</dbReference>
<dbReference type="DIP" id="DIP-24317N"/>
<dbReference type="FunCoup" id="Q19325">
    <property type="interactions" value="1058"/>
</dbReference>
<dbReference type="IntAct" id="Q19325">
    <property type="interactions" value="11"/>
</dbReference>
<dbReference type="MINT" id="Q19325"/>
<dbReference type="STRING" id="6239.F10G7.4.1"/>
<dbReference type="PaxDb" id="6239-F10G7.4"/>
<dbReference type="PeptideAtlas" id="Q19325"/>
<dbReference type="EnsemblMetazoa" id="F10G7.4.1">
    <property type="protein sequence ID" value="F10G7.4.1"/>
    <property type="gene ID" value="WBGene00004737"/>
</dbReference>
<dbReference type="GeneID" id="173808"/>
<dbReference type="KEGG" id="cel:CELE_F10G7.4"/>
<dbReference type="UCSC" id="F10G7.4">
    <property type="organism name" value="c. elegans"/>
</dbReference>
<dbReference type="AGR" id="WB:WBGene00004737"/>
<dbReference type="CTD" id="173808"/>
<dbReference type="WormBase" id="F10G7.4">
    <property type="protein sequence ID" value="CE02628"/>
    <property type="gene ID" value="WBGene00004737"/>
    <property type="gene designation" value="scc-1"/>
</dbReference>
<dbReference type="eggNOG" id="KOG1213">
    <property type="taxonomic scope" value="Eukaryota"/>
</dbReference>
<dbReference type="GeneTree" id="ENSGT00940000154655"/>
<dbReference type="HOGENOM" id="CLU_015775_1_1_1"/>
<dbReference type="InParanoid" id="Q19325"/>
<dbReference type="OMA" id="LMIWKET"/>
<dbReference type="OrthoDB" id="10071381at2759"/>
<dbReference type="PhylomeDB" id="Q19325"/>
<dbReference type="Reactome" id="R-CEL-2468052">
    <property type="pathway name" value="Establishment of Sister Chromatid Cohesion"/>
</dbReference>
<dbReference type="Reactome" id="R-CEL-2470946">
    <property type="pathway name" value="Cohesin Loading onto Chromatin"/>
</dbReference>
<dbReference type="Reactome" id="R-CEL-2500257">
    <property type="pathway name" value="Resolution of Sister Chromatid Cohesion"/>
</dbReference>
<dbReference type="Reactome" id="R-CEL-3108214">
    <property type="pathway name" value="SUMOylation of DNA damage response and repair proteins"/>
</dbReference>
<dbReference type="PRO" id="PR:Q19325"/>
<dbReference type="Proteomes" id="UP000001940">
    <property type="component" value="Chromosome II"/>
</dbReference>
<dbReference type="Bgee" id="WBGene00004737">
    <property type="expression patterns" value="Expressed in germ line (C elegans) and 4 other cell types or tissues"/>
</dbReference>
<dbReference type="GO" id="GO:0008278">
    <property type="term" value="C:cohesin complex"/>
    <property type="evidence" value="ECO:0000353"/>
    <property type="project" value="WormBase"/>
</dbReference>
<dbReference type="GO" id="GO:0005737">
    <property type="term" value="C:cytoplasm"/>
    <property type="evidence" value="ECO:0007669"/>
    <property type="project" value="UniProtKB-SubCell"/>
</dbReference>
<dbReference type="GO" id="GO:0000444">
    <property type="term" value="C:MIS12/MIND type complex"/>
    <property type="evidence" value="ECO:0000314"/>
    <property type="project" value="ComplexPortal"/>
</dbReference>
<dbReference type="GO" id="GO:0005634">
    <property type="term" value="C:nucleus"/>
    <property type="evidence" value="ECO:0000314"/>
    <property type="project" value="WormBase"/>
</dbReference>
<dbReference type="GO" id="GO:0003682">
    <property type="term" value="F:chromatin binding"/>
    <property type="evidence" value="ECO:0000318"/>
    <property type="project" value="GO_Central"/>
</dbReference>
<dbReference type="GO" id="GO:0003684">
    <property type="term" value="F:damaged DNA binding"/>
    <property type="evidence" value="ECO:0000250"/>
    <property type="project" value="WormBase"/>
</dbReference>
<dbReference type="GO" id="GO:0051301">
    <property type="term" value="P:cell division"/>
    <property type="evidence" value="ECO:0007669"/>
    <property type="project" value="UniProtKB-KW"/>
</dbReference>
<dbReference type="GO" id="GO:0034087">
    <property type="term" value="P:establishment of mitotic sister chromatid cohesion"/>
    <property type="evidence" value="ECO:0000314"/>
    <property type="project" value="ComplexPortal"/>
</dbReference>
<dbReference type="GO" id="GO:0051321">
    <property type="term" value="P:meiotic cell cycle"/>
    <property type="evidence" value="ECO:0000315"/>
    <property type="project" value="WormBase"/>
</dbReference>
<dbReference type="GO" id="GO:1990414">
    <property type="term" value="P:replication-born double-strand break repair via sister chromatid exchange"/>
    <property type="evidence" value="ECO:0000318"/>
    <property type="project" value="GO_Central"/>
</dbReference>
<dbReference type="GO" id="GO:0007062">
    <property type="term" value="P:sister chromatid cohesion"/>
    <property type="evidence" value="ECO:0000318"/>
    <property type="project" value="GO_Central"/>
</dbReference>
<dbReference type="GO" id="GO:0007130">
    <property type="term" value="P:synaptonemal complex assembly"/>
    <property type="evidence" value="ECO:0000304"/>
    <property type="project" value="WormBase"/>
</dbReference>
<dbReference type="CDD" id="cd21792">
    <property type="entry name" value="Rad21_Rec8_M_NXP1-like"/>
    <property type="match status" value="1"/>
</dbReference>
<dbReference type="FunFam" id="1.10.10.580:FF:000001">
    <property type="entry name" value="double-strand-break repair protein rad21 homolog"/>
    <property type="match status" value="1"/>
</dbReference>
<dbReference type="Gene3D" id="1.10.10.580">
    <property type="entry name" value="Structural maintenance of chromosome 1. Chain E"/>
    <property type="match status" value="1"/>
</dbReference>
<dbReference type="InterPro" id="IPR049589">
    <property type="entry name" value="NXP1_M-like"/>
</dbReference>
<dbReference type="InterPro" id="IPR039781">
    <property type="entry name" value="Rad21/Rec8-like"/>
</dbReference>
<dbReference type="InterPro" id="IPR006909">
    <property type="entry name" value="Rad21/Rec8_C_eu"/>
</dbReference>
<dbReference type="InterPro" id="IPR006910">
    <property type="entry name" value="Rad21_Rec8_N"/>
</dbReference>
<dbReference type="InterPro" id="IPR023093">
    <property type="entry name" value="ScpA-like_C"/>
</dbReference>
<dbReference type="InterPro" id="IPR036390">
    <property type="entry name" value="WH_DNA-bd_sf"/>
</dbReference>
<dbReference type="PANTHER" id="PTHR12585">
    <property type="entry name" value="SCC1 / RAD21 FAMILY MEMBER"/>
    <property type="match status" value="1"/>
</dbReference>
<dbReference type="PANTHER" id="PTHR12585:SF68">
    <property type="entry name" value="SISTER CHROMATID COHESION PROTEIN 1"/>
    <property type="match status" value="1"/>
</dbReference>
<dbReference type="Pfam" id="PF04824">
    <property type="entry name" value="Rad21_Rec8"/>
    <property type="match status" value="1"/>
</dbReference>
<dbReference type="Pfam" id="PF04825">
    <property type="entry name" value="Rad21_Rec8_N"/>
    <property type="match status" value="1"/>
</dbReference>
<dbReference type="SUPFAM" id="SSF46785">
    <property type="entry name" value="Winged helix' DNA-binding domain"/>
    <property type="match status" value="1"/>
</dbReference>
<organism evidence="6">
    <name type="scientific">Caenorhabditis elegans</name>
    <dbReference type="NCBI Taxonomy" id="6239"/>
    <lineage>
        <taxon>Eukaryota</taxon>
        <taxon>Metazoa</taxon>
        <taxon>Ecdysozoa</taxon>
        <taxon>Nematoda</taxon>
        <taxon>Chromadorea</taxon>
        <taxon>Rhabditida</taxon>
        <taxon>Rhabditina</taxon>
        <taxon>Rhabditomorpha</taxon>
        <taxon>Rhabditoidea</taxon>
        <taxon>Rhabditidae</taxon>
        <taxon>Peloderinae</taxon>
        <taxon>Caenorhabditis</taxon>
    </lineage>
</organism>
<comment type="function">
    <text evidence="1 3 4">Cleavable component of the cohesin complex involved in chromosome cohesion during cell cycle (PubMed:12808038, PubMed:12827206). The cohesin complex is required for the cohesion of sister chromatids after DNA replication (PubMed:12808038, PubMed:12827206). The cohesin complex apparently forms a large proteinaceous ring within which sister chromatids can be trapped (By similarity). At metaphase-anaphase transition, this protein is cleaved and dissociates from chromatin, allowing sister chromatids to segregate (By similarity).</text>
</comment>
<comment type="subunit">
    <text evidence="4">Component of the cohesin complex, composed of the smc-1 and smc-3 heterodimer attached via their hinge domain, scc-1 which links them, and scc-3. Interacts with smc-1, smc-3, scc-3 and tim-1.</text>
</comment>
<comment type="subcellular location">
    <subcellularLocation>
        <location evidence="3 4">Nucleus</location>
    </subcellularLocation>
    <subcellularLocation>
        <location evidence="3 4">Chromosome</location>
    </subcellularLocation>
    <subcellularLocation>
        <location evidence="3">Cytoplasm</location>
    </subcellularLocation>
    <text evidence="3 4">Shows cell-cycle dependent localization to chromosomes, with an accumulation on chromosomes apparent during mitotic interphase and telephase, but more diffuse nuclear expression during prometaphase, metaphase and anaphase.</text>
</comment>
<comment type="developmental stage">
    <text evidence="3">Expressed at high levels in actively dividing cells, during all stages of development.</text>
</comment>
<comment type="disruption phenotype">
    <text evidence="3 4">Postembryonic RNAi-mediated knock-down results in either larval arrest, or adult sterility with a protruding vulva phenotype (PubMed:12808038, PubMed:12827206). Worms have defective chromosome segregation (PubMed:12808038).</text>
</comment>
<comment type="similarity">
    <text evidence="5">Belongs to the rad21 family.</text>
</comment>
<accession>Q19325</accession>
<name>SCC1_CAEEL</name>
<keyword id="KW-0131">Cell cycle</keyword>
<keyword id="KW-0132">Cell division</keyword>
<keyword id="KW-0158">Chromosome</keyword>
<keyword id="KW-0963">Cytoplasm</keyword>
<keyword id="KW-0498">Mitosis</keyword>
<keyword id="KW-0539">Nucleus</keyword>
<keyword id="KW-1185">Reference proteome</keyword>
<evidence type="ECO:0000250" key="1">
    <source>
        <dbReference type="UniProtKB" id="Q12158"/>
    </source>
</evidence>
<evidence type="ECO:0000256" key="2">
    <source>
        <dbReference type="SAM" id="MobiDB-lite"/>
    </source>
</evidence>
<evidence type="ECO:0000269" key="3">
    <source>
    </source>
</evidence>
<evidence type="ECO:0000269" key="4">
    <source>
    </source>
</evidence>
<evidence type="ECO:0000305" key="5"/>
<evidence type="ECO:0000312" key="6">
    <source>
        <dbReference type="Proteomes" id="UP000001940"/>
    </source>
</evidence>
<evidence type="ECO:0000312" key="7">
    <source>
        <dbReference type="WormBase" id="F10G7.4"/>
    </source>
</evidence>
<gene>
    <name evidence="7" type="primary">scc-1</name>
    <name evidence="7" type="synonym">coh-2</name>
    <name evidence="7" type="synonym">rad-21.1</name>
    <name evidence="7" type="ORF">F10G7.4</name>
</gene>
<sequence>MFYAQFVLAKKGPLAKVWLAAHWEKKLTKAQIFETDVPQAIEEVIRPKVKMALRTVGHLLLGIVRIYSKKTRYLLADTNEAYQKMKINFRNGFSFEVDIPENAEIEEDFSNFIDKYNITVPEFHDADYNEQLIMANVSRREDITMKETVNFNVEFNIDADFDGFGDEGESWQLDHLYGSVEPLSLRPTPQPESLMEVERDRDVAANGTEISRIDADSVIFSEGPTRPNLIFDNQEGGNFMPEMNLKVENQTLENDGGVGPADMFSSMIHPVREHAVADVQNDDGMDFDYQPFEPENVEPSRPQSPESFALEPLDVEHMEGRKKRQRKARKLIVDAETMISNDAFREQQEDFSDTMRVVEMAPPTRKMFNLCVSGDLQHLSREPGCKMFNRELLQRYRRCLVTREFDLNYTMQELSDSSSFTPSMEAQAEPWEDLNLNEDIQEDIQAQGPAVDEFFNDVRMDDDDDRQPAQEMDFGDNFDFPQEVEHQECAPIPIQSGFAGENKENEDAEDWSDPFGSSNSSRRGQLEAYGFGNTSTYKEDDGKWAKRAKHILKKVSADIETSGQADFSSVTATAKNRKQAAEQFYSLLTLAKSQAISVDQSEPYGEIVIRPGANFKEACPLSSPKPMGLGNTMENSTMRTPMRPV</sequence>
<proteinExistence type="evidence at protein level"/>
<feature type="chain" id="PRO_0000432843" description="Sister chromatid cohesion protein 1" evidence="5">
    <location>
        <begin position="1"/>
        <end position="645"/>
    </location>
</feature>
<feature type="region of interest" description="Disordered" evidence="2">
    <location>
        <begin position="292"/>
        <end position="311"/>
    </location>
</feature>
<feature type="region of interest" description="Disordered" evidence="2">
    <location>
        <begin position="495"/>
        <end position="527"/>
    </location>
</feature>
<feature type="region of interest" description="Disordered" evidence="2">
    <location>
        <begin position="619"/>
        <end position="645"/>
    </location>
</feature>
<protein>
    <recommendedName>
        <fullName evidence="1">Sister chromatid cohesion protein 1</fullName>
    </recommendedName>
</protein>
<reference evidence="6" key="1">
    <citation type="journal article" date="1998" name="Science">
        <title>Genome sequence of the nematode C. elegans: a platform for investigating biology.</title>
        <authorList>
            <consortium name="The C. elegans sequencing consortium"/>
        </authorList>
    </citation>
    <scope>NUCLEOTIDE SEQUENCE [LARGE SCALE GENOMIC DNA]</scope>
    <source>
        <strain evidence="6">Bristol N2</strain>
    </source>
</reference>
<reference evidence="5" key="2">
    <citation type="journal article" date="2003" name="Mol. Biol. Cell">
        <title>Distinct developmental function of two Caenorhabditis elegans homologs of the cohesin subunit Scc1/Rad21.</title>
        <authorList>
            <person name="Mito Y."/>
            <person name="Sugimoto A."/>
            <person name="Yamamoto M."/>
        </authorList>
    </citation>
    <scope>FUNCTION</scope>
    <scope>SUBCELLULAR LOCATION</scope>
    <scope>DEVELOPMENTAL STAGE</scope>
    <scope>DISRUPTION PHENOTYPE</scope>
</reference>
<reference evidence="5" key="3">
    <citation type="journal article" date="2003" name="Nature">
        <title>Chromosome cohesion is regulated by a clock gene paralogue TIM-1.</title>
        <authorList>
            <person name="Chan R.C."/>
            <person name="Chan A."/>
            <person name="Jeon M."/>
            <person name="Wu T.F."/>
            <person name="Pasqualone D."/>
            <person name="Rougvie A.E."/>
            <person name="Meyer B.J."/>
        </authorList>
    </citation>
    <scope>FUNCTION</scope>
    <scope>IDENTIFICATION IN THE COHESIN COMPLEX</scope>
    <scope>INTERACTION WITH SCC-3; SMC-1; SMC-3 AND TIM-1</scope>
    <scope>SUBCELLULAR LOCATION</scope>
    <scope>DISRUPTION PHENOTYPE</scope>
</reference>